<comment type="catalytic activity">
    <reaction evidence="1">
        <text>(S)-malate + NAD(+) = pyruvate + CO2 + NADH</text>
        <dbReference type="Rhea" id="RHEA:12653"/>
        <dbReference type="ChEBI" id="CHEBI:15361"/>
        <dbReference type="ChEBI" id="CHEBI:15589"/>
        <dbReference type="ChEBI" id="CHEBI:16526"/>
        <dbReference type="ChEBI" id="CHEBI:57540"/>
        <dbReference type="ChEBI" id="CHEBI:57945"/>
        <dbReference type="EC" id="1.1.1.38"/>
    </reaction>
</comment>
<comment type="catalytic activity">
    <reaction evidence="1">
        <text>oxaloacetate + H(+) = pyruvate + CO2</text>
        <dbReference type="Rhea" id="RHEA:15641"/>
        <dbReference type="ChEBI" id="CHEBI:15361"/>
        <dbReference type="ChEBI" id="CHEBI:15378"/>
        <dbReference type="ChEBI" id="CHEBI:16452"/>
        <dbReference type="ChEBI" id="CHEBI:16526"/>
        <dbReference type="EC" id="1.1.1.38"/>
    </reaction>
</comment>
<comment type="cofactor">
    <cofactor evidence="1">
        <name>Mg(2+)</name>
        <dbReference type="ChEBI" id="CHEBI:18420"/>
    </cofactor>
    <cofactor evidence="1">
        <name>Mn(2+)</name>
        <dbReference type="ChEBI" id="CHEBI:29035"/>
    </cofactor>
    <text evidence="1">Divalent metal cations. Prefers magnesium or manganese.</text>
</comment>
<comment type="subunit">
    <text evidence="1">Homotetramer.</text>
</comment>
<comment type="similarity">
    <text evidence="1">Belongs to the malic enzymes family.</text>
</comment>
<proteinExistence type="inferred from homology"/>
<keyword id="KW-0479">Metal-binding</keyword>
<keyword id="KW-0520">NAD</keyword>
<keyword id="KW-0560">Oxidoreductase</keyword>
<keyword id="KW-1185">Reference proteome</keyword>
<gene>
    <name evidence="1" type="primary">maeA</name>
    <name type="ordered locus">Sbal_0676</name>
</gene>
<sequence>MDDNKRPLYLPFAGPAILEAPLINKGSAFSEEERIFFNLEGLVPYAIETIEEQASRAYDQFRSFNNDLDKHIYLRNIQDTNETLFYRLVQNNISEMMPIIYTPTVGLACERFSKNYRRNRGLFISYPNKDRIDDILNNSTRQKVKIIVVTDGERILGLGDQGIGGMGIPIGKLSLYTSCGGISPAYTLPITLDVGTDNPQLLEDPMYMGWRHPRIGGEEYAEFIEAFMQAVHVRWPDTLIQFEDFAQKNAMPILERYKDRYCCFNDDIQGTAAVAVGSLLAACKAAGTELNQQRIAFLGAGSAGCGIAEAIVAQMVSEGISDEQARTQVCMVDRWGLLLDNMPNLLPFQQKLAQKCTNIQNWSNFSDNISLLDVVNNTKPTVLIGVSGVPGLFTEEIIRAMHSHCARPIIFPLSNPTSRVEATPKDILHWTSGQALVATGSPFEPVVVDGETYEIAQCNNSFIFPGIGLGVLASGARHVSDAMLMASSRALAECSPLAIDGSGPLLPKLEDIHAVSKHIAFAVGKVAVEQGLTLPMSDEILQQSIEGNFWSPEYRRYKRTSF</sequence>
<evidence type="ECO:0000255" key="1">
    <source>
        <dbReference type="HAMAP-Rule" id="MF_01619"/>
    </source>
</evidence>
<accession>A3D0E1</accession>
<feature type="chain" id="PRO_1000069539" description="NAD-dependent malic enzyme">
    <location>
        <begin position="1"/>
        <end position="562"/>
    </location>
</feature>
<feature type="active site" description="Proton donor" evidence="1">
    <location>
        <position position="101"/>
    </location>
</feature>
<feature type="active site" description="Proton acceptor" evidence="1">
    <location>
        <position position="172"/>
    </location>
</feature>
<feature type="binding site" evidence="1">
    <location>
        <position position="154"/>
    </location>
    <ligand>
        <name>NAD(+)</name>
        <dbReference type="ChEBI" id="CHEBI:57540"/>
    </ligand>
</feature>
<feature type="binding site" evidence="1">
    <location>
        <position position="243"/>
    </location>
    <ligand>
        <name>a divalent metal cation</name>
        <dbReference type="ChEBI" id="CHEBI:60240"/>
    </ligand>
</feature>
<feature type="binding site" evidence="1">
    <location>
        <position position="244"/>
    </location>
    <ligand>
        <name>a divalent metal cation</name>
        <dbReference type="ChEBI" id="CHEBI:60240"/>
    </ligand>
</feature>
<feature type="binding site" evidence="1">
    <location>
        <position position="267"/>
    </location>
    <ligand>
        <name>a divalent metal cation</name>
        <dbReference type="ChEBI" id="CHEBI:60240"/>
    </ligand>
</feature>
<feature type="binding site" evidence="1">
    <location>
        <position position="267"/>
    </location>
    <ligand>
        <name>NAD(+)</name>
        <dbReference type="ChEBI" id="CHEBI:57540"/>
    </ligand>
</feature>
<feature type="binding site" evidence="1">
    <location>
        <position position="415"/>
    </location>
    <ligand>
        <name>NAD(+)</name>
        <dbReference type="ChEBI" id="CHEBI:57540"/>
    </ligand>
</feature>
<feature type="site" description="Important for activity" evidence="1">
    <location>
        <position position="267"/>
    </location>
</feature>
<protein>
    <recommendedName>
        <fullName evidence="1">NAD-dependent malic enzyme</fullName>
        <shortName evidence="1">NAD-ME</shortName>
        <ecNumber evidence="1">1.1.1.38</ecNumber>
    </recommendedName>
</protein>
<organism>
    <name type="scientific">Shewanella baltica (strain OS155 / ATCC BAA-1091)</name>
    <dbReference type="NCBI Taxonomy" id="325240"/>
    <lineage>
        <taxon>Bacteria</taxon>
        <taxon>Pseudomonadati</taxon>
        <taxon>Pseudomonadota</taxon>
        <taxon>Gammaproteobacteria</taxon>
        <taxon>Alteromonadales</taxon>
        <taxon>Shewanellaceae</taxon>
        <taxon>Shewanella</taxon>
    </lineage>
</organism>
<reference key="1">
    <citation type="submission" date="2007-02" db="EMBL/GenBank/DDBJ databases">
        <title>Complete sequence of chromosome of Shewanella baltica OS155.</title>
        <authorList>
            <consortium name="US DOE Joint Genome Institute"/>
            <person name="Copeland A."/>
            <person name="Lucas S."/>
            <person name="Lapidus A."/>
            <person name="Barry K."/>
            <person name="Detter J.C."/>
            <person name="Glavina del Rio T."/>
            <person name="Hammon N."/>
            <person name="Israni S."/>
            <person name="Dalin E."/>
            <person name="Tice H."/>
            <person name="Pitluck S."/>
            <person name="Sims D.R."/>
            <person name="Brettin T."/>
            <person name="Bruce D."/>
            <person name="Han C."/>
            <person name="Tapia R."/>
            <person name="Brainard J."/>
            <person name="Schmutz J."/>
            <person name="Larimer F."/>
            <person name="Land M."/>
            <person name="Hauser L."/>
            <person name="Kyrpides N."/>
            <person name="Mikhailova N."/>
            <person name="Brettar I."/>
            <person name="Klappenbach J."/>
            <person name="Konstantinidis K."/>
            <person name="Rodrigues J."/>
            <person name="Tiedje J."/>
            <person name="Richardson P."/>
        </authorList>
    </citation>
    <scope>NUCLEOTIDE SEQUENCE [LARGE SCALE GENOMIC DNA]</scope>
    <source>
        <strain>OS155 / ATCC BAA-1091</strain>
    </source>
</reference>
<name>MAO1_SHEB5</name>
<dbReference type="EC" id="1.1.1.38" evidence="1"/>
<dbReference type="EMBL" id="CP000563">
    <property type="protein sequence ID" value="ABN60204.1"/>
    <property type="molecule type" value="Genomic_DNA"/>
</dbReference>
<dbReference type="RefSeq" id="WP_011845811.1">
    <property type="nucleotide sequence ID" value="NC_009052.1"/>
</dbReference>
<dbReference type="SMR" id="A3D0E1"/>
<dbReference type="STRING" id="325240.Sbal_0676"/>
<dbReference type="KEGG" id="sbl:Sbal_0676"/>
<dbReference type="HOGENOM" id="CLU_011405_5_2_6"/>
<dbReference type="OrthoDB" id="3314528at2"/>
<dbReference type="Proteomes" id="UP000001557">
    <property type="component" value="Chromosome"/>
</dbReference>
<dbReference type="GO" id="GO:0005829">
    <property type="term" value="C:cytosol"/>
    <property type="evidence" value="ECO:0007669"/>
    <property type="project" value="TreeGrafter"/>
</dbReference>
<dbReference type="GO" id="GO:0004471">
    <property type="term" value="F:malate dehydrogenase (decarboxylating) (NAD+) activity"/>
    <property type="evidence" value="ECO:0007669"/>
    <property type="project" value="UniProtKB-UniRule"/>
</dbReference>
<dbReference type="GO" id="GO:0046872">
    <property type="term" value="F:metal ion binding"/>
    <property type="evidence" value="ECO:0007669"/>
    <property type="project" value="UniProtKB-KW"/>
</dbReference>
<dbReference type="GO" id="GO:0051287">
    <property type="term" value="F:NAD binding"/>
    <property type="evidence" value="ECO:0007669"/>
    <property type="project" value="InterPro"/>
</dbReference>
<dbReference type="GO" id="GO:0008948">
    <property type="term" value="F:oxaloacetate decarboxylase activity"/>
    <property type="evidence" value="ECO:0007669"/>
    <property type="project" value="UniProtKB-UniRule"/>
</dbReference>
<dbReference type="GO" id="GO:0006108">
    <property type="term" value="P:malate metabolic process"/>
    <property type="evidence" value="ECO:0007669"/>
    <property type="project" value="TreeGrafter"/>
</dbReference>
<dbReference type="CDD" id="cd05312">
    <property type="entry name" value="NAD_bind_1_malic_enz"/>
    <property type="match status" value="1"/>
</dbReference>
<dbReference type="FunFam" id="3.40.50.10380:FF:000001">
    <property type="entry name" value="NAD-dependent malic enzyme"/>
    <property type="match status" value="1"/>
</dbReference>
<dbReference type="FunFam" id="3.40.50.720:FF:000055">
    <property type="entry name" value="NAD-dependent malic enzyme"/>
    <property type="match status" value="1"/>
</dbReference>
<dbReference type="Gene3D" id="3.40.50.10380">
    <property type="entry name" value="Malic enzyme, N-terminal domain"/>
    <property type="match status" value="1"/>
</dbReference>
<dbReference type="Gene3D" id="3.40.50.720">
    <property type="entry name" value="NAD(P)-binding Rossmann-like Domain"/>
    <property type="match status" value="1"/>
</dbReference>
<dbReference type="HAMAP" id="MF_01619">
    <property type="entry name" value="NAD_malic_enz"/>
    <property type="match status" value="1"/>
</dbReference>
<dbReference type="InterPro" id="IPR046346">
    <property type="entry name" value="Aminoacid_DH-like_N_sf"/>
</dbReference>
<dbReference type="InterPro" id="IPR015884">
    <property type="entry name" value="Malic_enzyme_CS"/>
</dbReference>
<dbReference type="InterPro" id="IPR012301">
    <property type="entry name" value="Malic_N_dom"/>
</dbReference>
<dbReference type="InterPro" id="IPR037062">
    <property type="entry name" value="Malic_N_dom_sf"/>
</dbReference>
<dbReference type="InterPro" id="IPR012302">
    <property type="entry name" value="Malic_NAD-bd"/>
</dbReference>
<dbReference type="InterPro" id="IPR001891">
    <property type="entry name" value="Malic_OxRdtase"/>
</dbReference>
<dbReference type="InterPro" id="IPR036291">
    <property type="entry name" value="NAD(P)-bd_dom_sf"/>
</dbReference>
<dbReference type="InterPro" id="IPR023667">
    <property type="entry name" value="NAD_malic_enz_proteobac"/>
</dbReference>
<dbReference type="NCBIfam" id="NF010052">
    <property type="entry name" value="PRK13529.1"/>
    <property type="match status" value="1"/>
</dbReference>
<dbReference type="PANTHER" id="PTHR23406">
    <property type="entry name" value="MALIC ENZYME-RELATED"/>
    <property type="match status" value="1"/>
</dbReference>
<dbReference type="PANTHER" id="PTHR23406:SF34">
    <property type="entry name" value="NAD-DEPENDENT MALIC ENZYME, MITOCHONDRIAL"/>
    <property type="match status" value="1"/>
</dbReference>
<dbReference type="Pfam" id="PF00390">
    <property type="entry name" value="malic"/>
    <property type="match status" value="1"/>
</dbReference>
<dbReference type="Pfam" id="PF03949">
    <property type="entry name" value="Malic_M"/>
    <property type="match status" value="1"/>
</dbReference>
<dbReference type="PIRSF" id="PIRSF000106">
    <property type="entry name" value="ME"/>
    <property type="match status" value="1"/>
</dbReference>
<dbReference type="PRINTS" id="PR00072">
    <property type="entry name" value="MALOXRDTASE"/>
</dbReference>
<dbReference type="SMART" id="SM01274">
    <property type="entry name" value="malic"/>
    <property type="match status" value="1"/>
</dbReference>
<dbReference type="SMART" id="SM00919">
    <property type="entry name" value="Malic_M"/>
    <property type="match status" value="1"/>
</dbReference>
<dbReference type="SUPFAM" id="SSF53223">
    <property type="entry name" value="Aminoacid dehydrogenase-like, N-terminal domain"/>
    <property type="match status" value="1"/>
</dbReference>
<dbReference type="SUPFAM" id="SSF51735">
    <property type="entry name" value="NAD(P)-binding Rossmann-fold domains"/>
    <property type="match status" value="1"/>
</dbReference>
<dbReference type="PROSITE" id="PS00331">
    <property type="entry name" value="MALIC_ENZYMES"/>
    <property type="match status" value="1"/>
</dbReference>